<organism>
    <name type="scientific">Mesorhizobium japonicum (strain LMG 29417 / CECT 9101 / MAFF 303099)</name>
    <name type="common">Mesorhizobium loti (strain MAFF 303099)</name>
    <dbReference type="NCBI Taxonomy" id="266835"/>
    <lineage>
        <taxon>Bacteria</taxon>
        <taxon>Pseudomonadati</taxon>
        <taxon>Pseudomonadota</taxon>
        <taxon>Alphaproteobacteria</taxon>
        <taxon>Hyphomicrobiales</taxon>
        <taxon>Phyllobacteriaceae</taxon>
        <taxon>Mesorhizobium</taxon>
    </lineage>
</organism>
<feature type="chain" id="PRO_0000138884" description="Protease HtpX homolog">
    <location>
        <begin position="1"/>
        <end position="336"/>
    </location>
</feature>
<feature type="transmembrane region" description="Helical" evidence="1">
    <location>
        <begin position="7"/>
        <end position="24"/>
    </location>
</feature>
<feature type="transmembrane region" description="Helical" evidence="1">
    <location>
        <begin position="29"/>
        <end position="48"/>
    </location>
</feature>
<feature type="transmembrane region" description="Helical" evidence="1">
    <location>
        <begin position="145"/>
        <end position="165"/>
    </location>
</feature>
<feature type="transmembrane region" description="Helical" evidence="1">
    <location>
        <begin position="171"/>
        <end position="191"/>
    </location>
</feature>
<feature type="region of interest" description="Disordered" evidence="2">
    <location>
        <begin position="278"/>
        <end position="336"/>
    </location>
</feature>
<feature type="compositionally biased region" description="Low complexity" evidence="2">
    <location>
        <begin position="278"/>
        <end position="287"/>
    </location>
</feature>
<feature type="active site" evidence="1">
    <location>
        <position position="131"/>
    </location>
</feature>
<feature type="binding site" evidence="1">
    <location>
        <position position="130"/>
    </location>
    <ligand>
        <name>Zn(2+)</name>
        <dbReference type="ChEBI" id="CHEBI:29105"/>
        <note>catalytic</note>
    </ligand>
</feature>
<feature type="binding site" evidence="1">
    <location>
        <position position="134"/>
    </location>
    <ligand>
        <name>Zn(2+)</name>
        <dbReference type="ChEBI" id="CHEBI:29105"/>
        <note>catalytic</note>
    </ligand>
</feature>
<feature type="binding site" evidence="1">
    <location>
        <position position="200"/>
    </location>
    <ligand>
        <name>Zn(2+)</name>
        <dbReference type="ChEBI" id="CHEBI:29105"/>
        <note>catalytic</note>
    </ligand>
</feature>
<comment type="cofactor">
    <cofactor evidence="1">
        <name>Zn(2+)</name>
        <dbReference type="ChEBI" id="CHEBI:29105"/>
    </cofactor>
    <text evidence="1">Binds 1 zinc ion per subunit.</text>
</comment>
<comment type="subcellular location">
    <subcellularLocation>
        <location evidence="1">Cell inner membrane</location>
        <topology evidence="1">Multi-pass membrane protein</topology>
    </subcellularLocation>
</comment>
<comment type="similarity">
    <text evidence="1">Belongs to the peptidase M48B family.</text>
</comment>
<sequence>MNTLRTAMLLAAMTALFMGVGFLIGGSGGMMIALLIAAGTNLFSYWNADKMVLSMNRAVEVDEKNAPEYYAIVQALAKQAGLPMPRTYLIDNPQPNAFATGRNPQNAAVAASTGLLQRLTHEEVAAVMAHELAHVQHRDTLTMTIVATFAGAISMLGNFAFFLGGNRDNNPFGFVGVLAAMIVAPFAAMIVQMAVSRTREYEADRRGAEICGHPLWLASALDKIARGAERIPNPDAERNPAMAHLFIINPLHGERMDNLFSTHPSTDNRIAALQEMAQQMAGGTQAAPRPTPRQAGEQQPSGPWGQAPQAEQPAEPERPKANPWGRNPTGPKGRWS</sequence>
<gene>
    <name evidence="1" type="primary">htpX</name>
    <name type="ordered locus">mlr4097</name>
</gene>
<keyword id="KW-0997">Cell inner membrane</keyword>
<keyword id="KW-1003">Cell membrane</keyword>
<keyword id="KW-0378">Hydrolase</keyword>
<keyword id="KW-0472">Membrane</keyword>
<keyword id="KW-0479">Metal-binding</keyword>
<keyword id="KW-0482">Metalloprotease</keyword>
<keyword id="KW-0645">Protease</keyword>
<keyword id="KW-0812">Transmembrane</keyword>
<keyword id="KW-1133">Transmembrane helix</keyword>
<keyword id="KW-0862">Zinc</keyword>
<evidence type="ECO:0000255" key="1">
    <source>
        <dbReference type="HAMAP-Rule" id="MF_00188"/>
    </source>
</evidence>
<evidence type="ECO:0000256" key="2">
    <source>
        <dbReference type="SAM" id="MobiDB-lite"/>
    </source>
</evidence>
<proteinExistence type="inferred from homology"/>
<dbReference type="EC" id="3.4.24.-" evidence="1"/>
<dbReference type="EMBL" id="BA000012">
    <property type="protein sequence ID" value="BAB50837.1"/>
    <property type="molecule type" value="Genomic_DNA"/>
</dbReference>
<dbReference type="RefSeq" id="WP_010912180.1">
    <property type="nucleotide sequence ID" value="NC_002678.2"/>
</dbReference>
<dbReference type="SMR" id="Q98ET0"/>
<dbReference type="KEGG" id="mlo:mlr4097"/>
<dbReference type="PATRIC" id="fig|266835.9.peg.3241"/>
<dbReference type="eggNOG" id="COG0501">
    <property type="taxonomic scope" value="Bacteria"/>
</dbReference>
<dbReference type="HOGENOM" id="CLU_042266_3_0_5"/>
<dbReference type="Proteomes" id="UP000000552">
    <property type="component" value="Chromosome"/>
</dbReference>
<dbReference type="GO" id="GO:0005886">
    <property type="term" value="C:plasma membrane"/>
    <property type="evidence" value="ECO:0007669"/>
    <property type="project" value="UniProtKB-SubCell"/>
</dbReference>
<dbReference type="GO" id="GO:0004222">
    <property type="term" value="F:metalloendopeptidase activity"/>
    <property type="evidence" value="ECO:0007669"/>
    <property type="project" value="UniProtKB-UniRule"/>
</dbReference>
<dbReference type="GO" id="GO:0008270">
    <property type="term" value="F:zinc ion binding"/>
    <property type="evidence" value="ECO:0007669"/>
    <property type="project" value="UniProtKB-UniRule"/>
</dbReference>
<dbReference type="GO" id="GO:0006508">
    <property type="term" value="P:proteolysis"/>
    <property type="evidence" value="ECO:0007669"/>
    <property type="project" value="UniProtKB-KW"/>
</dbReference>
<dbReference type="CDD" id="cd07336">
    <property type="entry name" value="M48B_HtpX_like"/>
    <property type="match status" value="1"/>
</dbReference>
<dbReference type="Gene3D" id="3.30.2010.10">
    <property type="entry name" value="Metalloproteases ('zincins'), catalytic domain"/>
    <property type="match status" value="1"/>
</dbReference>
<dbReference type="HAMAP" id="MF_00188">
    <property type="entry name" value="Pept_M48_protease_HtpX"/>
    <property type="match status" value="1"/>
</dbReference>
<dbReference type="InterPro" id="IPR050083">
    <property type="entry name" value="HtpX_protease"/>
</dbReference>
<dbReference type="InterPro" id="IPR022919">
    <property type="entry name" value="Pept_M48_protease_HtpX"/>
</dbReference>
<dbReference type="InterPro" id="IPR001915">
    <property type="entry name" value="Peptidase_M48"/>
</dbReference>
<dbReference type="NCBIfam" id="NF002363">
    <property type="entry name" value="PRK01345.1"/>
    <property type="match status" value="1"/>
</dbReference>
<dbReference type="NCBIfam" id="NF002826">
    <property type="entry name" value="PRK03001.1"/>
    <property type="match status" value="1"/>
</dbReference>
<dbReference type="PANTHER" id="PTHR43221">
    <property type="entry name" value="PROTEASE HTPX"/>
    <property type="match status" value="1"/>
</dbReference>
<dbReference type="PANTHER" id="PTHR43221:SF1">
    <property type="entry name" value="PROTEASE HTPX"/>
    <property type="match status" value="1"/>
</dbReference>
<dbReference type="Pfam" id="PF01435">
    <property type="entry name" value="Peptidase_M48"/>
    <property type="match status" value="1"/>
</dbReference>
<dbReference type="PROSITE" id="PS00142">
    <property type="entry name" value="ZINC_PROTEASE"/>
    <property type="match status" value="1"/>
</dbReference>
<reference key="1">
    <citation type="journal article" date="2000" name="DNA Res.">
        <title>Complete genome structure of the nitrogen-fixing symbiotic bacterium Mesorhizobium loti.</title>
        <authorList>
            <person name="Kaneko T."/>
            <person name="Nakamura Y."/>
            <person name="Sato S."/>
            <person name="Asamizu E."/>
            <person name="Kato T."/>
            <person name="Sasamoto S."/>
            <person name="Watanabe A."/>
            <person name="Idesawa K."/>
            <person name="Ishikawa A."/>
            <person name="Kawashima K."/>
            <person name="Kimura T."/>
            <person name="Kishida Y."/>
            <person name="Kiyokawa C."/>
            <person name="Kohara M."/>
            <person name="Matsumoto M."/>
            <person name="Matsuno A."/>
            <person name="Mochizuki Y."/>
            <person name="Nakayama S."/>
            <person name="Nakazaki N."/>
            <person name="Shimpo S."/>
            <person name="Sugimoto M."/>
            <person name="Takeuchi C."/>
            <person name="Yamada M."/>
            <person name="Tabata S."/>
        </authorList>
    </citation>
    <scope>NUCLEOTIDE SEQUENCE [LARGE SCALE GENOMIC DNA]</scope>
    <source>
        <strain>LMG 29417 / CECT 9101 / MAFF 303099</strain>
    </source>
</reference>
<name>HTPX_RHILO</name>
<accession>Q98ET0</accession>
<protein>
    <recommendedName>
        <fullName evidence="1">Protease HtpX homolog</fullName>
        <ecNumber evidence="1">3.4.24.-</ecNumber>
    </recommendedName>
</protein>